<name>PAR16_HUMAN</name>
<organism>
    <name type="scientific">Homo sapiens</name>
    <name type="common">Human</name>
    <dbReference type="NCBI Taxonomy" id="9606"/>
    <lineage>
        <taxon>Eukaryota</taxon>
        <taxon>Metazoa</taxon>
        <taxon>Chordata</taxon>
        <taxon>Craniata</taxon>
        <taxon>Vertebrata</taxon>
        <taxon>Euteleostomi</taxon>
        <taxon>Mammalia</taxon>
        <taxon>Eutheria</taxon>
        <taxon>Euarchontoglires</taxon>
        <taxon>Primates</taxon>
        <taxon>Haplorrhini</taxon>
        <taxon>Catarrhini</taxon>
        <taxon>Hominidae</taxon>
        <taxon>Homo</taxon>
    </lineage>
</organism>
<sequence>MQPSGWAAAREAAGRDMLAADLRCSLFASALQSYKRDSVLRPFPASYARGDCKDFEALLADASKLPNLKELLQSSGDNHKRAWDLVSWILSSKVLTIHSAGKAEFEKIQKLTGAPHTPVPAPDFLFEIEYFDPANAKFYETKGERDLIYAFHGSRLENFHSIIHNGLHCHLNKTSLFGEGTYLTSDLSLALIYSPHGHGWQHSLLGPILSCVAVCEVIDHPDVKCQTKKKDSKEIDRRRARIKHSEGGDIPPKYFVVTNNQLLRVKYLLVYSQKPPKRASSQLSWFSSHWFTVMISLYLLLLLIVSVINSSAFQHFWNRAKR</sequence>
<keyword id="KW-0002">3D-structure</keyword>
<keyword id="KW-0013">ADP-ribosylation</keyword>
<keyword id="KW-0025">Alternative splicing</keyword>
<keyword id="KW-0256">Endoplasmic reticulum</keyword>
<keyword id="KW-0328">Glycosyltransferase</keyword>
<keyword id="KW-0472">Membrane</keyword>
<keyword id="KW-0520">NAD</keyword>
<keyword id="KW-0548">Nucleotidyltransferase</keyword>
<keyword id="KW-1267">Proteomics identification</keyword>
<keyword id="KW-1185">Reference proteome</keyword>
<keyword id="KW-0808">Transferase</keyword>
<keyword id="KW-0812">Transmembrane</keyword>
<keyword id="KW-1133">Transmembrane helix</keyword>
<keyword id="KW-0834">Unfolded protein response</keyword>
<accession>Q8N5Y8</accession>
<accession>A0A024R5Y7</accession>
<accession>Q6PK64</accession>
<accession>Q9NX03</accession>
<proteinExistence type="evidence at protein level"/>
<gene>
    <name evidence="12 14" type="primary">PARP16</name>
    <name evidence="12" type="synonym">ARTD15</name>
    <name evidence="14" type="synonym">C15orf30</name>
</gene>
<reference key="1">
    <citation type="journal article" date="2004" name="Nat. Genet.">
        <title>Complete sequencing and characterization of 21,243 full-length human cDNAs.</title>
        <authorList>
            <person name="Ota T."/>
            <person name="Suzuki Y."/>
            <person name="Nishikawa T."/>
            <person name="Otsuki T."/>
            <person name="Sugiyama T."/>
            <person name="Irie R."/>
            <person name="Wakamatsu A."/>
            <person name="Hayashi K."/>
            <person name="Sato H."/>
            <person name="Nagai K."/>
            <person name="Kimura K."/>
            <person name="Makita H."/>
            <person name="Sekine M."/>
            <person name="Obayashi M."/>
            <person name="Nishi T."/>
            <person name="Shibahara T."/>
            <person name="Tanaka T."/>
            <person name="Ishii S."/>
            <person name="Yamamoto J."/>
            <person name="Saito K."/>
            <person name="Kawai Y."/>
            <person name="Isono Y."/>
            <person name="Nakamura Y."/>
            <person name="Nagahari K."/>
            <person name="Murakami K."/>
            <person name="Yasuda T."/>
            <person name="Iwayanagi T."/>
            <person name="Wagatsuma M."/>
            <person name="Shiratori A."/>
            <person name="Sudo H."/>
            <person name="Hosoiri T."/>
            <person name="Kaku Y."/>
            <person name="Kodaira H."/>
            <person name="Kondo H."/>
            <person name="Sugawara M."/>
            <person name="Takahashi M."/>
            <person name="Kanda K."/>
            <person name="Yokoi T."/>
            <person name="Furuya T."/>
            <person name="Kikkawa E."/>
            <person name="Omura Y."/>
            <person name="Abe K."/>
            <person name="Kamihara K."/>
            <person name="Katsuta N."/>
            <person name="Sato K."/>
            <person name="Tanikawa M."/>
            <person name="Yamazaki M."/>
            <person name="Ninomiya K."/>
            <person name="Ishibashi T."/>
            <person name="Yamashita H."/>
            <person name="Murakawa K."/>
            <person name="Fujimori K."/>
            <person name="Tanai H."/>
            <person name="Kimata M."/>
            <person name="Watanabe M."/>
            <person name="Hiraoka S."/>
            <person name="Chiba Y."/>
            <person name="Ishida S."/>
            <person name="Ono Y."/>
            <person name="Takiguchi S."/>
            <person name="Watanabe S."/>
            <person name="Yosida M."/>
            <person name="Hotuta T."/>
            <person name="Kusano J."/>
            <person name="Kanehori K."/>
            <person name="Takahashi-Fujii A."/>
            <person name="Hara H."/>
            <person name="Tanase T.-O."/>
            <person name="Nomura Y."/>
            <person name="Togiya S."/>
            <person name="Komai F."/>
            <person name="Hara R."/>
            <person name="Takeuchi K."/>
            <person name="Arita M."/>
            <person name="Imose N."/>
            <person name="Musashino K."/>
            <person name="Yuuki H."/>
            <person name="Oshima A."/>
            <person name="Sasaki N."/>
            <person name="Aotsuka S."/>
            <person name="Yoshikawa Y."/>
            <person name="Matsunawa H."/>
            <person name="Ichihara T."/>
            <person name="Shiohata N."/>
            <person name="Sano S."/>
            <person name="Moriya S."/>
            <person name="Momiyama H."/>
            <person name="Satoh N."/>
            <person name="Takami S."/>
            <person name="Terashima Y."/>
            <person name="Suzuki O."/>
            <person name="Nakagawa S."/>
            <person name="Senoh A."/>
            <person name="Mizoguchi H."/>
            <person name="Goto Y."/>
            <person name="Shimizu F."/>
            <person name="Wakebe H."/>
            <person name="Hishigaki H."/>
            <person name="Watanabe T."/>
            <person name="Sugiyama A."/>
            <person name="Takemoto M."/>
            <person name="Kawakami B."/>
            <person name="Yamazaki M."/>
            <person name="Watanabe K."/>
            <person name="Kumagai A."/>
            <person name="Itakura S."/>
            <person name="Fukuzumi Y."/>
            <person name="Fujimori Y."/>
            <person name="Komiyama M."/>
            <person name="Tashiro H."/>
            <person name="Tanigami A."/>
            <person name="Fujiwara T."/>
            <person name="Ono T."/>
            <person name="Yamada K."/>
            <person name="Fujii Y."/>
            <person name="Ozaki K."/>
            <person name="Hirao M."/>
            <person name="Ohmori Y."/>
            <person name="Kawabata A."/>
            <person name="Hikiji T."/>
            <person name="Kobatake N."/>
            <person name="Inagaki H."/>
            <person name="Ikema Y."/>
            <person name="Okamoto S."/>
            <person name="Okitani R."/>
            <person name="Kawakami T."/>
            <person name="Noguchi S."/>
            <person name="Itoh T."/>
            <person name="Shigeta K."/>
            <person name="Senba T."/>
            <person name="Matsumura K."/>
            <person name="Nakajima Y."/>
            <person name="Mizuno T."/>
            <person name="Morinaga M."/>
            <person name="Sasaki M."/>
            <person name="Togashi T."/>
            <person name="Oyama M."/>
            <person name="Hata H."/>
            <person name="Watanabe M."/>
            <person name="Komatsu T."/>
            <person name="Mizushima-Sugano J."/>
            <person name="Satoh T."/>
            <person name="Shirai Y."/>
            <person name="Takahashi Y."/>
            <person name="Nakagawa K."/>
            <person name="Okumura K."/>
            <person name="Nagase T."/>
            <person name="Nomura N."/>
            <person name="Kikuchi H."/>
            <person name="Masuho Y."/>
            <person name="Yamashita R."/>
            <person name="Nakai K."/>
            <person name="Yada T."/>
            <person name="Nakamura Y."/>
            <person name="Ohara O."/>
            <person name="Isogai T."/>
            <person name="Sugano S."/>
        </authorList>
    </citation>
    <scope>NUCLEOTIDE SEQUENCE [LARGE SCALE MRNA] (ISOFORM 2)</scope>
    <source>
        <tissue>Carcinoma</tissue>
    </source>
</reference>
<reference key="2">
    <citation type="journal article" date="2006" name="Nature">
        <title>Analysis of the DNA sequence and duplication history of human chromosome 15.</title>
        <authorList>
            <person name="Zody M.C."/>
            <person name="Garber M."/>
            <person name="Sharpe T."/>
            <person name="Young S.K."/>
            <person name="Rowen L."/>
            <person name="O'Neill K."/>
            <person name="Whittaker C.A."/>
            <person name="Kamal M."/>
            <person name="Chang J.L."/>
            <person name="Cuomo C.A."/>
            <person name="Dewar K."/>
            <person name="FitzGerald M.G."/>
            <person name="Kodira C.D."/>
            <person name="Madan A."/>
            <person name="Qin S."/>
            <person name="Yang X."/>
            <person name="Abbasi N."/>
            <person name="Abouelleil A."/>
            <person name="Arachchi H.M."/>
            <person name="Baradarani L."/>
            <person name="Birditt B."/>
            <person name="Bloom S."/>
            <person name="Bloom T."/>
            <person name="Borowsky M.L."/>
            <person name="Burke J."/>
            <person name="Butler J."/>
            <person name="Cook A."/>
            <person name="DeArellano K."/>
            <person name="DeCaprio D."/>
            <person name="Dorris L. III"/>
            <person name="Dors M."/>
            <person name="Eichler E.E."/>
            <person name="Engels R."/>
            <person name="Fahey J."/>
            <person name="Fleetwood P."/>
            <person name="Friedman C."/>
            <person name="Gearin G."/>
            <person name="Hall J.L."/>
            <person name="Hensley G."/>
            <person name="Johnson E."/>
            <person name="Jones C."/>
            <person name="Kamat A."/>
            <person name="Kaur A."/>
            <person name="Locke D.P."/>
            <person name="Madan A."/>
            <person name="Munson G."/>
            <person name="Jaffe D.B."/>
            <person name="Lui A."/>
            <person name="Macdonald P."/>
            <person name="Mauceli E."/>
            <person name="Naylor J.W."/>
            <person name="Nesbitt R."/>
            <person name="Nicol R."/>
            <person name="O'Leary S.B."/>
            <person name="Ratcliffe A."/>
            <person name="Rounsley S."/>
            <person name="She X."/>
            <person name="Sneddon K.M.B."/>
            <person name="Stewart S."/>
            <person name="Sougnez C."/>
            <person name="Stone S.M."/>
            <person name="Topham K."/>
            <person name="Vincent D."/>
            <person name="Wang S."/>
            <person name="Zimmer A.R."/>
            <person name="Birren B.W."/>
            <person name="Hood L."/>
            <person name="Lander E.S."/>
            <person name="Nusbaum C."/>
        </authorList>
    </citation>
    <scope>NUCLEOTIDE SEQUENCE [LARGE SCALE GENOMIC DNA]</scope>
</reference>
<reference key="3">
    <citation type="submission" date="2001-07" db="EMBL/GenBank/DDBJ databases">
        <authorList>
            <person name="Mural R.J."/>
            <person name="Istrail S."/>
            <person name="Sutton G.G."/>
            <person name="Florea L."/>
            <person name="Halpern A.L."/>
            <person name="Mobarry C.M."/>
            <person name="Lippert R."/>
            <person name="Walenz B."/>
            <person name="Shatkay H."/>
            <person name="Dew I."/>
            <person name="Miller J.R."/>
            <person name="Flanigan M.J."/>
            <person name="Edwards N.J."/>
            <person name="Bolanos R."/>
            <person name="Fasulo D."/>
            <person name="Halldorsson B.V."/>
            <person name="Hannenhalli S."/>
            <person name="Turner R."/>
            <person name="Yooseph S."/>
            <person name="Lu F."/>
            <person name="Nusskern D.R."/>
            <person name="Shue B.C."/>
            <person name="Zheng X.H."/>
            <person name="Zhong F."/>
            <person name="Delcher A.L."/>
            <person name="Huson D.H."/>
            <person name="Kravitz S.A."/>
            <person name="Mouchard L."/>
            <person name="Reinert K."/>
            <person name="Remington K.A."/>
            <person name="Clark A.G."/>
            <person name="Waterman M.S."/>
            <person name="Eichler E.E."/>
            <person name="Adams M.D."/>
            <person name="Hunkapiller M.W."/>
            <person name="Myers E.W."/>
            <person name="Venter J.C."/>
        </authorList>
    </citation>
    <scope>NUCLEOTIDE SEQUENCE [LARGE SCALE GENOMIC DNA]</scope>
</reference>
<reference key="4">
    <citation type="journal article" date="2004" name="Genome Res.">
        <title>The status, quality, and expansion of the NIH full-length cDNA project: the Mammalian Gene Collection (MGC).</title>
        <authorList>
            <consortium name="The MGC Project Team"/>
        </authorList>
    </citation>
    <scope>NUCLEOTIDE SEQUENCE [LARGE SCALE MRNA] (ISOFORMS 1 AND 3)</scope>
    <scope>VARIANT PRO-280</scope>
    <source>
        <tissue>Brain</tissue>
    </source>
</reference>
<reference key="5">
    <citation type="journal article" date="2010" name="Trends Biochem. Sci.">
        <title>Toward a unified nomenclature for mammalian ADP-ribosyltransferases.</title>
        <authorList>
            <person name="Hottiger M.O."/>
            <person name="Hassa P.O."/>
            <person name="Luscher B."/>
            <person name="Schuler H."/>
            <person name="Koch-Nolte F."/>
        </authorList>
    </citation>
    <scope>NOMENCLATURE</scope>
</reference>
<reference key="6">
    <citation type="journal article" date="2012" name="Nat. Cell Biol.">
        <title>PARP16 is a tail-anchored endoplasmic reticulum protein required for the PERK-and IRE1alpha-mediated unfolded protein response.</title>
        <authorList>
            <person name="Jwa M."/>
            <person name="Chang P."/>
        </authorList>
    </citation>
    <scope>FUNCTION</scope>
    <scope>SUBCELLULAR LOCATION</scope>
    <scope>MUTAGENESIS OF HIS-152 AND TYR-182</scope>
</reference>
<reference key="7">
    <citation type="journal article" date="2012" name="PLoS ONE">
        <title>PARP16/ARTD15 is a novel endoplasmic-reticulum-associated mono-ADP-ribosyltransferase that interacts with, and modifies karyopherin-beta1.</title>
        <authorList>
            <person name="Di Paola S."/>
            <person name="Micaroni M."/>
            <person name="Di Tullio G."/>
            <person name="Buccione R."/>
            <person name="Di Girolamo M."/>
        </authorList>
    </citation>
    <scope>FUNCTION</scope>
    <scope>SUBCELLULAR LOCATION</scope>
    <scope>TOPOLOGY</scope>
    <scope>INTERACTION WITH KPNB1</scope>
    <scope>CATALYTIC ACTIVITY</scope>
    <scope>MUTAGENESIS OF HIS-152 AND TYR-254</scope>
    <scope>BIOPHYSICOCHEMICAL PROPERTIES</scope>
    <scope>AUTO-ADP-RIBOSYLATION</scope>
</reference>
<reference key="8">
    <citation type="journal article" date="2014" name="Nat. Commun.">
        <title>Family-wide analysis of poly(ADP-ribose) polymerase activity.</title>
        <authorList>
            <person name="Vyas S."/>
            <person name="Matic I."/>
            <person name="Uchima L."/>
            <person name="Rood J."/>
            <person name="Zaja R."/>
            <person name="Hay R.T."/>
            <person name="Ahel I."/>
            <person name="Chang P."/>
        </authorList>
    </citation>
    <scope>FUNCTION</scope>
    <scope>CATALYTIC ACTIVITY</scope>
    <scope>ADP-RIBOSYLATION AT ASP-37; GLU-70; LYS-110 AND LYS-137</scope>
</reference>
<reference key="9">
    <citation type="journal article" date="2015" name="Proteomics">
        <title>N-terminome analysis of the human mitochondrial proteome.</title>
        <authorList>
            <person name="Vaca Jacome A.S."/>
            <person name="Rabilloud T."/>
            <person name="Schaeffer-Reiss C."/>
            <person name="Rompais M."/>
            <person name="Ayoub D."/>
            <person name="Lane L."/>
            <person name="Bairoch A."/>
            <person name="Van Dorsselaer A."/>
            <person name="Carapito C."/>
        </authorList>
    </citation>
    <scope>IDENTIFICATION BY MASS SPECTROMETRY [LARGE SCALE ANALYSIS]</scope>
</reference>
<reference key="10">
    <citation type="journal article" date="2021" name="Cell">
        <title>Ribosome ADP-ribosylation inhibits translation and maintains proteostasis in cancers.</title>
        <authorList>
            <person name="Challa S."/>
            <person name="Khulpateea B.R."/>
            <person name="Nandu T."/>
            <person name="Camacho C.V."/>
            <person name="Ryu K.W."/>
            <person name="Chen H."/>
            <person name="Peng Y."/>
            <person name="Lea J.S."/>
            <person name="Kraus W.L."/>
        </authorList>
    </citation>
    <scope>FUNCTION</scope>
    <scope>CATALYTIC ACTIVITY</scope>
    <scope>AUTO-ADP-RIBOSYLATION</scope>
</reference>
<reference key="11">
    <citation type="journal article" date="2012" name="J. Biol. Chem.">
        <title>Crystal structure of human ADP-ribose transferase ARTD15/PARP16 reveals a novel putative regulatory domain.</title>
        <authorList>
            <person name="Karlberg T."/>
            <person name="Thorsell A.G."/>
            <person name="Kallas A."/>
            <person name="Schuler H."/>
        </authorList>
    </citation>
    <scope>X-RAY CRYSTALLOGRAPHY (2.7 ANGSTROMS) OF 5-279 IN COMPLEX WITH NAD ANALOG</scope>
    <scope>AUTO-ADP-RIBOSYLATION</scope>
    <scope>DOMAIN PARP ALPHA-HELICAL</scope>
    <scope>NAD-BINDING SITES</scope>
</reference>
<dbReference type="EC" id="2.4.2.-" evidence="6 8 9"/>
<dbReference type="EMBL" id="AK000516">
    <property type="protein sequence ID" value="BAA91222.1"/>
    <property type="molecule type" value="mRNA"/>
</dbReference>
<dbReference type="EMBL" id="AC068213">
    <property type="status" value="NOT_ANNOTATED_CDS"/>
    <property type="molecule type" value="Genomic_DNA"/>
</dbReference>
<dbReference type="EMBL" id="CH471082">
    <property type="protein sequence ID" value="EAW77718.1"/>
    <property type="molecule type" value="Genomic_DNA"/>
</dbReference>
<dbReference type="EMBL" id="CH471082">
    <property type="protein sequence ID" value="EAW77720.1"/>
    <property type="molecule type" value="Genomic_DNA"/>
</dbReference>
<dbReference type="EMBL" id="BC006389">
    <property type="protein sequence ID" value="AAH06389.1"/>
    <property type="molecule type" value="mRNA"/>
</dbReference>
<dbReference type="EMBL" id="BC031074">
    <property type="protein sequence ID" value="AAH31074.1"/>
    <property type="molecule type" value="mRNA"/>
</dbReference>
<dbReference type="CCDS" id="CCDS10204.1">
    <molecule id="Q8N5Y8-3"/>
</dbReference>
<dbReference type="CCDS" id="CCDS81897.1">
    <molecule id="Q8N5Y8-2"/>
</dbReference>
<dbReference type="CCDS" id="CCDS92018.1">
    <molecule id="Q8N5Y8-1"/>
</dbReference>
<dbReference type="RefSeq" id="NP_001303872.1">
    <molecule id="Q8N5Y8-1"/>
    <property type="nucleotide sequence ID" value="NM_001316943.2"/>
</dbReference>
<dbReference type="RefSeq" id="NP_001303873.1">
    <molecule id="Q8N5Y8-2"/>
    <property type="nucleotide sequence ID" value="NM_001316944.2"/>
</dbReference>
<dbReference type="RefSeq" id="NP_060321.3">
    <molecule id="Q8N5Y8-3"/>
    <property type="nucleotide sequence ID" value="NM_017851.5"/>
</dbReference>
<dbReference type="PDB" id="4F0D">
    <property type="method" value="X-ray"/>
    <property type="resolution" value="2.70 A"/>
    <property type="chains" value="A/B=5-279"/>
</dbReference>
<dbReference type="PDB" id="6HXR">
    <property type="method" value="X-ray"/>
    <property type="resolution" value="2.90 A"/>
    <property type="chains" value="A/B/C=5-279"/>
</dbReference>
<dbReference type="PDB" id="6HXS">
    <property type="method" value="X-ray"/>
    <property type="resolution" value="2.05 A"/>
    <property type="chains" value="A/B/C=5-279"/>
</dbReference>
<dbReference type="PDB" id="6W65">
    <property type="method" value="X-ray"/>
    <property type="resolution" value="2.13 A"/>
    <property type="chains" value="A/B/C=5-279"/>
</dbReference>
<dbReference type="PDBsum" id="4F0D"/>
<dbReference type="PDBsum" id="6HXR"/>
<dbReference type="PDBsum" id="6HXS"/>
<dbReference type="PDBsum" id="6W65"/>
<dbReference type="SMR" id="Q8N5Y8"/>
<dbReference type="BioGRID" id="120294">
    <property type="interactions" value="59"/>
</dbReference>
<dbReference type="FunCoup" id="Q8N5Y8">
    <property type="interactions" value="1238"/>
</dbReference>
<dbReference type="IntAct" id="Q8N5Y8">
    <property type="interactions" value="35"/>
</dbReference>
<dbReference type="MINT" id="Q8N5Y8"/>
<dbReference type="STRING" id="9606.ENSP00000261888"/>
<dbReference type="BindingDB" id="Q8N5Y8"/>
<dbReference type="ChEMBL" id="CHEMBL4105981"/>
<dbReference type="DrugCentral" id="Q8N5Y8"/>
<dbReference type="GlyGen" id="Q8N5Y8">
    <property type="glycosylation" value="1 site, 1 O-linked glycan (1 site)"/>
</dbReference>
<dbReference type="iPTMnet" id="Q8N5Y8"/>
<dbReference type="PhosphoSitePlus" id="Q8N5Y8"/>
<dbReference type="SwissPalm" id="Q8N5Y8"/>
<dbReference type="BioMuta" id="PARP16"/>
<dbReference type="DMDM" id="116248565"/>
<dbReference type="jPOST" id="Q8N5Y8"/>
<dbReference type="MassIVE" id="Q8N5Y8"/>
<dbReference type="PaxDb" id="9606-ENSP00000261888"/>
<dbReference type="PeptideAtlas" id="Q8N5Y8"/>
<dbReference type="ProteomicsDB" id="72111">
    <molecule id="Q8N5Y8-1"/>
</dbReference>
<dbReference type="ProteomicsDB" id="72112">
    <molecule id="Q8N5Y8-2"/>
</dbReference>
<dbReference type="ProteomicsDB" id="72113">
    <molecule id="Q8N5Y8-3"/>
</dbReference>
<dbReference type="Pumba" id="Q8N5Y8"/>
<dbReference type="Antibodypedia" id="25928">
    <property type="antibodies" value="167 antibodies from 24 providers"/>
</dbReference>
<dbReference type="DNASU" id="54956"/>
<dbReference type="Ensembl" id="ENST00000261888.10">
    <molecule id="Q8N5Y8-3"/>
    <property type="protein sequence ID" value="ENSP00000261888.6"/>
    <property type="gene ID" value="ENSG00000138617.16"/>
</dbReference>
<dbReference type="Ensembl" id="ENST00000444347.2">
    <molecule id="Q8N5Y8-2"/>
    <property type="protein sequence ID" value="ENSP00000396118.2"/>
    <property type="gene ID" value="ENSG00000138617.16"/>
</dbReference>
<dbReference type="Ensembl" id="ENST00000649807.2">
    <molecule id="Q8N5Y8-1"/>
    <property type="protein sequence ID" value="ENSP00000496935.1"/>
    <property type="gene ID" value="ENSG00000138617.16"/>
</dbReference>
<dbReference type="GeneID" id="54956"/>
<dbReference type="KEGG" id="hsa:54956"/>
<dbReference type="MANE-Select" id="ENST00000649807.2">
    <property type="protein sequence ID" value="ENSP00000496935.1"/>
    <property type="RefSeq nucleotide sequence ID" value="NM_001316943.2"/>
    <property type="RefSeq protein sequence ID" value="NP_001303872.1"/>
</dbReference>
<dbReference type="UCSC" id="uc002aop.4">
    <molecule id="Q8N5Y8-1"/>
    <property type="organism name" value="human"/>
</dbReference>
<dbReference type="AGR" id="HGNC:26040"/>
<dbReference type="CTD" id="54956"/>
<dbReference type="DisGeNET" id="54956"/>
<dbReference type="GeneCards" id="PARP16"/>
<dbReference type="HGNC" id="HGNC:26040">
    <property type="gene designation" value="PARP16"/>
</dbReference>
<dbReference type="HPA" id="ENSG00000138617">
    <property type="expression patterns" value="Low tissue specificity"/>
</dbReference>
<dbReference type="MIM" id="620391">
    <property type="type" value="gene"/>
</dbReference>
<dbReference type="neXtProt" id="NX_Q8N5Y8"/>
<dbReference type="OpenTargets" id="ENSG00000138617"/>
<dbReference type="PharmGKB" id="PA134984504"/>
<dbReference type="VEuPathDB" id="HostDB:ENSG00000138617"/>
<dbReference type="eggNOG" id="ENOG502QPKE">
    <property type="taxonomic scope" value="Eukaryota"/>
</dbReference>
<dbReference type="GeneTree" id="ENSGT00950000183129"/>
<dbReference type="HOGENOM" id="CLU_053263_1_0_1"/>
<dbReference type="InParanoid" id="Q8N5Y8"/>
<dbReference type="OMA" id="LLYGQSC"/>
<dbReference type="OrthoDB" id="19501at2759"/>
<dbReference type="PAN-GO" id="Q8N5Y8">
    <property type="GO annotations" value="8 GO annotations based on evolutionary models"/>
</dbReference>
<dbReference type="PhylomeDB" id="Q8N5Y8"/>
<dbReference type="TreeFam" id="TF323413"/>
<dbReference type="BRENDA" id="2.4.2.30">
    <property type="organism ID" value="2681"/>
</dbReference>
<dbReference type="BRENDA" id="2.4.2.31">
    <property type="organism ID" value="2681"/>
</dbReference>
<dbReference type="PathwayCommons" id="Q8N5Y8"/>
<dbReference type="Reactome" id="R-HSA-197264">
    <property type="pathway name" value="Nicotinamide salvaging"/>
</dbReference>
<dbReference type="Reactome" id="R-HSA-9683610">
    <property type="pathway name" value="Maturation of nucleoprotein"/>
</dbReference>
<dbReference type="Reactome" id="R-HSA-9694631">
    <property type="pathway name" value="Maturation of nucleoprotein"/>
</dbReference>
<dbReference type="SignaLink" id="Q8N5Y8"/>
<dbReference type="BioGRID-ORCS" id="54956">
    <property type="hits" value="9 hits in 1152 CRISPR screens"/>
</dbReference>
<dbReference type="ChiTaRS" id="PARP16">
    <property type="organism name" value="human"/>
</dbReference>
<dbReference type="EvolutionaryTrace" id="Q8N5Y8"/>
<dbReference type="GenomeRNAi" id="54956"/>
<dbReference type="Pharos" id="Q8N5Y8">
    <property type="development level" value="Tchem"/>
</dbReference>
<dbReference type="PRO" id="PR:Q8N5Y8"/>
<dbReference type="Proteomes" id="UP000005640">
    <property type="component" value="Chromosome 15"/>
</dbReference>
<dbReference type="RNAct" id="Q8N5Y8">
    <property type="molecule type" value="protein"/>
</dbReference>
<dbReference type="Bgee" id="ENSG00000138617">
    <property type="expression patterns" value="Expressed in secondary oocyte and 131 other cell types or tissues"/>
</dbReference>
<dbReference type="ExpressionAtlas" id="Q8N5Y8">
    <property type="expression patterns" value="baseline and differential"/>
</dbReference>
<dbReference type="GO" id="GO:0005829">
    <property type="term" value="C:cytosol"/>
    <property type="evidence" value="ECO:0000304"/>
    <property type="project" value="Reactome"/>
</dbReference>
<dbReference type="GO" id="GO:0005783">
    <property type="term" value="C:endoplasmic reticulum"/>
    <property type="evidence" value="ECO:0000315"/>
    <property type="project" value="UniProtKB"/>
</dbReference>
<dbReference type="GO" id="GO:0005789">
    <property type="term" value="C:endoplasmic reticulum membrane"/>
    <property type="evidence" value="ECO:0007669"/>
    <property type="project" value="UniProtKB-SubCell"/>
</dbReference>
<dbReference type="GO" id="GO:0071782">
    <property type="term" value="C:endoplasmic reticulum tubular network"/>
    <property type="evidence" value="ECO:0000315"/>
    <property type="project" value="UniProtKB"/>
</dbReference>
<dbReference type="GO" id="GO:0016020">
    <property type="term" value="C:membrane"/>
    <property type="evidence" value="ECO:0007005"/>
    <property type="project" value="UniProtKB"/>
</dbReference>
<dbReference type="GO" id="GO:0005635">
    <property type="term" value="C:nuclear envelope"/>
    <property type="evidence" value="ECO:0000314"/>
    <property type="project" value="UniProtKB"/>
</dbReference>
<dbReference type="GO" id="GO:0019900">
    <property type="term" value="F:kinase binding"/>
    <property type="evidence" value="ECO:0000353"/>
    <property type="project" value="UniProtKB"/>
</dbReference>
<dbReference type="GO" id="GO:0003950">
    <property type="term" value="F:NAD+ poly-ADP-ribosyltransferase activity"/>
    <property type="evidence" value="ECO:0000315"/>
    <property type="project" value="UniProtKB"/>
</dbReference>
<dbReference type="GO" id="GO:1990404">
    <property type="term" value="F:NAD+-protein mono-ADP-ribosyltransferase activity"/>
    <property type="evidence" value="ECO:0000314"/>
    <property type="project" value="UniProtKB"/>
</dbReference>
<dbReference type="GO" id="GO:0140806">
    <property type="term" value="F:NAD+-protein-aspartate ADP-ribosyltransferase activity"/>
    <property type="evidence" value="ECO:0000314"/>
    <property type="project" value="UniProtKB"/>
</dbReference>
<dbReference type="GO" id="GO:0140807">
    <property type="term" value="F:NAD+-protein-glutamate ADP-ribosyltransferase activity"/>
    <property type="evidence" value="ECO:0000314"/>
    <property type="project" value="UniProtKB"/>
</dbReference>
<dbReference type="GO" id="GO:0140804">
    <property type="term" value="F:NAD+-protein-lysine ADP-ribosyltransferase activity"/>
    <property type="evidence" value="ECO:0000314"/>
    <property type="project" value="UniProtKB"/>
</dbReference>
<dbReference type="GO" id="GO:0016779">
    <property type="term" value="F:nucleotidyltransferase activity"/>
    <property type="evidence" value="ECO:0007669"/>
    <property type="project" value="UniProtKB-KW"/>
</dbReference>
<dbReference type="GO" id="GO:0043539">
    <property type="term" value="F:protein serine/threonine kinase activator activity"/>
    <property type="evidence" value="ECO:0000315"/>
    <property type="project" value="UniProtKB"/>
</dbReference>
<dbReference type="GO" id="GO:1990830">
    <property type="term" value="P:cellular response to leukemia inhibitory factor"/>
    <property type="evidence" value="ECO:0007669"/>
    <property type="project" value="Ensembl"/>
</dbReference>
<dbReference type="GO" id="GO:0030968">
    <property type="term" value="P:endoplasmic reticulum unfolded protein response"/>
    <property type="evidence" value="ECO:0000315"/>
    <property type="project" value="UniProtKB"/>
</dbReference>
<dbReference type="GO" id="GO:0036498">
    <property type="term" value="P:IRE1-mediated unfolded protein response"/>
    <property type="evidence" value="ECO:0000315"/>
    <property type="project" value="UniProtKB"/>
</dbReference>
<dbReference type="GO" id="GO:2000766">
    <property type="term" value="P:negative regulation of cytoplasmic translation"/>
    <property type="evidence" value="ECO:0000314"/>
    <property type="project" value="UniProt"/>
</dbReference>
<dbReference type="GO" id="GO:0070213">
    <property type="term" value="P:protein auto-ADP-ribosylation"/>
    <property type="evidence" value="ECO:0000314"/>
    <property type="project" value="UniProtKB"/>
</dbReference>
<dbReference type="GO" id="GO:0019082">
    <property type="term" value="P:viral protein processing"/>
    <property type="evidence" value="ECO:0000304"/>
    <property type="project" value="Reactome"/>
</dbReference>
<dbReference type="FunFam" id="3.90.228.10:FF:000005">
    <property type="entry name" value="Poly [ADP-ribose] polymerase"/>
    <property type="match status" value="1"/>
</dbReference>
<dbReference type="Gene3D" id="3.90.228.10">
    <property type="match status" value="1"/>
</dbReference>
<dbReference type="InterPro" id="IPR051838">
    <property type="entry name" value="ARTD_PARP"/>
</dbReference>
<dbReference type="InterPro" id="IPR041400">
    <property type="entry name" value="PARP16_N"/>
</dbReference>
<dbReference type="InterPro" id="IPR012317">
    <property type="entry name" value="Poly(ADP-ribose)pol_cat_dom"/>
</dbReference>
<dbReference type="PANTHER" id="PTHR21328">
    <property type="entry name" value="POLY ADP-RIBOSE POLYMERASE FAMILY, MEMBER PARP"/>
    <property type="match status" value="1"/>
</dbReference>
<dbReference type="Pfam" id="PF18084">
    <property type="entry name" value="ARTD15_N"/>
    <property type="match status" value="1"/>
</dbReference>
<dbReference type="Pfam" id="PF00644">
    <property type="entry name" value="PARP"/>
    <property type="match status" value="1"/>
</dbReference>
<dbReference type="SUPFAM" id="SSF56399">
    <property type="entry name" value="ADP-ribosylation"/>
    <property type="match status" value="1"/>
</dbReference>
<dbReference type="PROSITE" id="PS51059">
    <property type="entry name" value="PARP_CATALYTIC"/>
    <property type="match status" value="1"/>
</dbReference>
<feature type="chain" id="PRO_0000252437" description="Protein mono-ADP-ribosyltransferase PARP16">
    <location>
        <begin position="1"/>
        <end position="322"/>
    </location>
</feature>
<feature type="topological domain" description="Cytoplasmic" evidence="2">
    <location>
        <begin position="1"/>
        <end position="287"/>
    </location>
</feature>
<feature type="transmembrane region" description="Helical" evidence="2">
    <location>
        <begin position="288"/>
        <end position="308"/>
    </location>
</feature>
<feature type="topological domain" description="Lumenal" evidence="2">
    <location>
        <begin position="309"/>
        <end position="322"/>
    </location>
</feature>
<feature type="domain" description="PARP alpha-helical">
    <location>
        <begin position="5"/>
        <end position="91"/>
    </location>
</feature>
<feature type="domain" description="PARP catalytic" evidence="3">
    <location>
        <begin position="94"/>
        <end position="279"/>
    </location>
</feature>
<feature type="binding site" evidence="5">
    <location>
        <position position="152"/>
    </location>
    <ligand>
        <name>NAD(+)</name>
        <dbReference type="ChEBI" id="CHEBI:57540"/>
    </ligand>
</feature>
<feature type="binding site" evidence="5">
    <location>
        <position position="182"/>
    </location>
    <ligand>
        <name>NAD(+)</name>
        <dbReference type="ChEBI" id="CHEBI:57540"/>
    </ligand>
</feature>
<feature type="binding site" evidence="5">
    <location>
        <position position="254"/>
    </location>
    <ligand>
        <name>NAD(+)</name>
        <dbReference type="ChEBI" id="CHEBI:57540"/>
    </ligand>
</feature>
<feature type="site" description="Nicotinamide-stacking aromate" evidence="5">
    <location>
        <position position="193"/>
    </location>
</feature>
<feature type="modified residue" description="ADP-ribosyl aspartic acid" evidence="8">
    <location>
        <position position="37"/>
    </location>
</feature>
<feature type="modified residue" description="ADP-ribosyl glutamic acid" evidence="8">
    <location>
        <position position="70"/>
    </location>
</feature>
<feature type="modified residue" description="N6-(ADP-ribosyl)lysine" evidence="8">
    <location>
        <position position="110"/>
    </location>
</feature>
<feature type="modified residue" description="N6-(ADP-ribosyl)lysine" evidence="8">
    <location>
        <position position="137"/>
    </location>
</feature>
<feature type="splice variant" id="VSP_020973" description="In isoform 2." evidence="10">
    <location>
        <begin position="59"/>
        <end position="173"/>
    </location>
</feature>
<feature type="splice variant" id="VSP_020974" description="In isoform 3." evidence="11">
    <original>K</original>
    <variation>KS</variation>
    <location>
        <position position="277"/>
    </location>
</feature>
<feature type="sequence variant" id="VAR_027864" description="In dbSNP:rs17852901." evidence="4">
    <original>S</original>
    <variation>P</variation>
    <location>
        <position position="280"/>
    </location>
</feature>
<feature type="mutagenesis site" description="Loss of ADP-ribosyltransferase activity; when associated with A-254." evidence="6">
    <original>H</original>
    <variation>A</variation>
    <location>
        <position position="152"/>
    </location>
</feature>
<feature type="mutagenesis site" description="ADP-ribosyltransferase activity is only 6% of wild-type; when associated with A-182." evidence="7">
    <original>H</original>
    <variation>Q</variation>
    <location>
        <position position="152"/>
    </location>
</feature>
<feature type="mutagenesis site" description="ADP-ribosyltransferase activity is only 6% of wild-type; when associated with Q-152." evidence="7">
    <original>Y</original>
    <variation>A</variation>
    <location>
        <position position="182"/>
    </location>
</feature>
<feature type="mutagenesis site" description="Loss of ADP-ribosyltransferase activity; when associated with H-152." evidence="6">
    <original>Y</original>
    <variation>A</variation>
    <location>
        <position position="254"/>
    </location>
</feature>
<feature type="helix" evidence="16">
    <location>
        <begin position="6"/>
        <end position="15"/>
    </location>
</feature>
<feature type="helix" evidence="16">
    <location>
        <begin position="17"/>
        <end position="32"/>
    </location>
</feature>
<feature type="helix" evidence="16">
    <location>
        <begin position="36"/>
        <end position="39"/>
    </location>
</feature>
<feature type="helix" evidence="16">
    <location>
        <begin position="45"/>
        <end position="47"/>
    </location>
</feature>
<feature type="strand" evidence="15">
    <location>
        <begin position="48"/>
        <end position="51"/>
    </location>
</feature>
<feature type="helix" evidence="16">
    <location>
        <begin position="55"/>
        <end position="62"/>
    </location>
</feature>
<feature type="helix" evidence="16">
    <location>
        <begin position="68"/>
        <end position="73"/>
    </location>
</feature>
<feature type="helix" evidence="16">
    <location>
        <begin position="76"/>
        <end position="78"/>
    </location>
</feature>
<feature type="helix" evidence="16">
    <location>
        <begin position="80"/>
        <end position="89"/>
    </location>
</feature>
<feature type="strand" evidence="16">
    <location>
        <begin position="93"/>
        <end position="100"/>
    </location>
</feature>
<feature type="helix" evidence="16">
    <location>
        <begin position="102"/>
        <end position="112"/>
    </location>
</feature>
<feature type="strand" evidence="16">
    <location>
        <begin position="123"/>
        <end position="130"/>
    </location>
</feature>
<feature type="helix" evidence="16">
    <location>
        <begin position="134"/>
        <end position="142"/>
    </location>
</feature>
<feature type="strand" evidence="16">
    <location>
        <begin position="147"/>
        <end position="153"/>
    </location>
</feature>
<feature type="helix" evidence="16">
    <location>
        <begin position="156"/>
        <end position="158"/>
    </location>
</feature>
<feature type="helix" evidence="16">
    <location>
        <begin position="159"/>
        <end position="165"/>
    </location>
</feature>
<feature type="strand" evidence="16">
    <location>
        <begin position="173"/>
        <end position="177"/>
    </location>
</feature>
<feature type="strand" evidence="16">
    <location>
        <begin position="179"/>
        <end position="185"/>
    </location>
</feature>
<feature type="helix" evidence="16">
    <location>
        <begin position="187"/>
        <end position="191"/>
    </location>
</feature>
<feature type="strand" evidence="16">
    <location>
        <begin position="207"/>
        <end position="218"/>
    </location>
</feature>
<feature type="strand" evidence="16">
    <location>
        <begin position="253"/>
        <end position="257"/>
    </location>
</feature>
<feature type="helix" evidence="16">
    <location>
        <begin position="260"/>
        <end position="262"/>
    </location>
</feature>
<feature type="strand" evidence="16">
    <location>
        <begin position="263"/>
        <end position="272"/>
    </location>
</feature>
<protein>
    <recommendedName>
        <fullName evidence="13">Protein mono-ADP-ribosyltransferase PARP16</fullName>
        <ecNumber evidence="6 8 9">2.4.2.-</ecNumber>
    </recommendedName>
    <alternativeName>
        <fullName evidence="12">ADP-ribosyltransferase diphtheria toxin-like 15</fullName>
    </alternativeName>
    <alternativeName>
        <fullName evidence="12">Poly [ADP-ribose] polymerase 16</fullName>
        <shortName evidence="12">PARP-16</shortName>
    </alternativeName>
</protein>
<evidence type="ECO:0000250" key="1">
    <source>
        <dbReference type="UniProtKB" id="Q9UGN5"/>
    </source>
</evidence>
<evidence type="ECO:0000255" key="2"/>
<evidence type="ECO:0000255" key="3">
    <source>
        <dbReference type="PROSITE-ProRule" id="PRU00397"/>
    </source>
</evidence>
<evidence type="ECO:0000269" key="4">
    <source>
    </source>
</evidence>
<evidence type="ECO:0000269" key="5">
    <source>
    </source>
</evidence>
<evidence type="ECO:0000269" key="6">
    <source>
    </source>
</evidence>
<evidence type="ECO:0000269" key="7">
    <source>
    </source>
</evidence>
<evidence type="ECO:0000269" key="8">
    <source>
    </source>
</evidence>
<evidence type="ECO:0000269" key="9">
    <source>
    </source>
</evidence>
<evidence type="ECO:0000303" key="10">
    <source>
    </source>
</evidence>
<evidence type="ECO:0000303" key="11">
    <source>
    </source>
</evidence>
<evidence type="ECO:0000303" key="12">
    <source>
    </source>
</evidence>
<evidence type="ECO:0000305" key="13"/>
<evidence type="ECO:0000312" key="14">
    <source>
        <dbReference type="HGNC" id="HGNC:26040"/>
    </source>
</evidence>
<evidence type="ECO:0007829" key="15">
    <source>
        <dbReference type="PDB" id="4F0D"/>
    </source>
</evidence>
<evidence type="ECO:0007829" key="16">
    <source>
        <dbReference type="PDB" id="6HXS"/>
    </source>
</evidence>
<comment type="function">
    <text evidence="6 7 8 9">Intracellular mono-ADP-ribosyltransferase that plays a role in different processes, such as protein translation and unfolded protein response (UPR), through the mono-ADP-ribosylation of proteins involved in those processes (PubMed:22701565, PubMed:23103912, PubMed:25043379, PubMed:34314702). Acts as an inhibitor of protein translation by catalyzing mono-ADP-ribosylation of ribosomal subunits, such as RPL14 and RPS6, thereby inhibiting polysome assembly and mRNA loading (PubMed:34314702). Mono-ADP-ribosylation of ribosomal subunits is promoted by NMNAT2 (PubMed:34314702). Involved in the unfolded protein response (UPR) by ADP-ribosylating and activating EIF2AK3 and ERN1, two important UPR effectors (PubMed:23103912). May also mediate mono-ADP-ribosylation of karyopherin KPNB1 a nuclear import factor (PubMed:22701565). May not modify proteins on arginine or cysteine residues compared to other mono-ADP-ribosyltransferases (PubMed:22701565).</text>
</comment>
<comment type="catalytic activity">
    <reaction evidence="8 9">
        <text>L-aspartyl-[protein] + NAD(+) = 4-O-(ADP-D-ribosyl)-L-aspartyl-[protein] + nicotinamide</text>
        <dbReference type="Rhea" id="RHEA:54424"/>
        <dbReference type="Rhea" id="RHEA-COMP:9867"/>
        <dbReference type="Rhea" id="RHEA-COMP:13832"/>
        <dbReference type="ChEBI" id="CHEBI:17154"/>
        <dbReference type="ChEBI" id="CHEBI:29961"/>
        <dbReference type="ChEBI" id="CHEBI:57540"/>
        <dbReference type="ChEBI" id="CHEBI:138102"/>
    </reaction>
    <physiologicalReaction direction="left-to-right" evidence="8 9">
        <dbReference type="Rhea" id="RHEA:54425"/>
    </physiologicalReaction>
</comment>
<comment type="catalytic activity">
    <reaction evidence="8 9">
        <text>L-glutamyl-[protein] + NAD(+) = 5-O-(ADP-D-ribosyl)-L-glutamyl-[protein] + nicotinamide</text>
        <dbReference type="Rhea" id="RHEA:58224"/>
        <dbReference type="Rhea" id="RHEA-COMP:10208"/>
        <dbReference type="Rhea" id="RHEA-COMP:15089"/>
        <dbReference type="ChEBI" id="CHEBI:17154"/>
        <dbReference type="ChEBI" id="CHEBI:29973"/>
        <dbReference type="ChEBI" id="CHEBI:57540"/>
        <dbReference type="ChEBI" id="CHEBI:142540"/>
    </reaction>
    <physiologicalReaction direction="left-to-right" evidence="8 9">
        <dbReference type="Rhea" id="RHEA:58225"/>
    </physiologicalReaction>
</comment>
<comment type="catalytic activity">
    <reaction evidence="8">
        <text>L-lysyl-[protein] + NAD(+) = N(6)-(ADP-D-ribosyl)-L-lysyl-[protein] + nicotinamide + H(+)</text>
        <dbReference type="Rhea" id="RHEA:58220"/>
        <dbReference type="Rhea" id="RHEA-COMP:9752"/>
        <dbReference type="Rhea" id="RHEA-COMP:15088"/>
        <dbReference type="ChEBI" id="CHEBI:15378"/>
        <dbReference type="ChEBI" id="CHEBI:17154"/>
        <dbReference type="ChEBI" id="CHEBI:29969"/>
        <dbReference type="ChEBI" id="CHEBI:57540"/>
        <dbReference type="ChEBI" id="CHEBI:142515"/>
    </reaction>
    <physiologicalReaction direction="left-to-right" evidence="8">
        <dbReference type="Rhea" id="RHEA:58221"/>
    </physiologicalReaction>
</comment>
<comment type="activity regulation">
    <text evidence="1">In absence of activation signal, PARP16 is autoinhibited by the PARP alpha-helical domain (also named HD region), which prevents effective NAD(+)-binding (By similarity). Activity is highly stimulated by signals, which unfold the PARP alpha-helical domain, relieving autoinhibition (By similarity).</text>
</comment>
<comment type="biophysicochemical properties">
    <kinetics>
        <KM evidence="6">290 uM for NAD (at 37 degrees Celsius)</KM>
        <Vmax evidence="6">0.7 pmol/h/ug enzyme (at 37 degrees Celsius)</Vmax>
    </kinetics>
</comment>
<comment type="subunit">
    <text evidence="5 6">Interacts with KPNB1.</text>
</comment>
<comment type="interaction">
    <interactant intactId="EBI-10266912">
        <id>Q8N5Y8</id>
    </interactant>
    <interactant intactId="EBI-10172181">
        <id>Q53SE7</id>
        <label>FLJ13057</label>
    </interactant>
    <organismsDiffer>false</organismsDiffer>
    <experiments>3</experiments>
</comment>
<comment type="subcellular location">
    <subcellularLocation>
        <location evidence="7">Endoplasmic reticulum membrane</location>
        <topology evidence="6">Single-pass type IV membrane protein</topology>
    </subcellularLocation>
</comment>
<comment type="alternative products">
    <event type="alternative splicing"/>
    <isoform>
        <id>Q8N5Y8-1</id>
        <name>1</name>
        <sequence type="displayed"/>
    </isoform>
    <isoform>
        <id>Q8N5Y8-2</id>
        <name>2</name>
        <sequence type="described" ref="VSP_020973"/>
    </isoform>
    <isoform>
        <id>Q8N5Y8-3</id>
        <name>3</name>
        <sequence type="described" ref="VSP_020974"/>
    </isoform>
</comment>
<comment type="domain">
    <text evidence="5">The PARP alpha-helical domain (also named HD region) is regulatory, it packs against the catalytic domain.</text>
</comment>
<comment type="PTM">
    <text evidence="5 6 8 9">Auto-mono-ADP-ribosylated.</text>
</comment>
<comment type="similarity">
    <text evidence="13">Belongs to the ARTD/PARP family.</text>
</comment>